<gene>
    <name evidence="1" type="primary">prfC</name>
    <name type="ordered locus">EF_0701</name>
</gene>
<comment type="function">
    <text evidence="1">Increases the formation of ribosomal termination complexes and stimulates activities of RF-1 and RF-2. It binds guanine nucleotides and has strong preference for UGA stop codons. It may interact directly with the ribosome. The stimulation of RF-1 and RF-2 is significantly reduced by GTP and GDP, but not by GMP.</text>
</comment>
<comment type="subcellular location">
    <subcellularLocation>
        <location evidence="1">Cytoplasm</location>
    </subcellularLocation>
</comment>
<comment type="similarity">
    <text evidence="1">Belongs to the TRAFAC class translation factor GTPase superfamily. Classic translation factor GTPase family. PrfC subfamily.</text>
</comment>
<reference key="1">
    <citation type="journal article" date="2003" name="Science">
        <title>Role of mobile DNA in the evolution of vancomycin-resistant Enterococcus faecalis.</title>
        <authorList>
            <person name="Paulsen I.T."/>
            <person name="Banerjei L."/>
            <person name="Myers G.S.A."/>
            <person name="Nelson K.E."/>
            <person name="Seshadri R."/>
            <person name="Read T.D."/>
            <person name="Fouts D.E."/>
            <person name="Eisen J.A."/>
            <person name="Gill S.R."/>
            <person name="Heidelberg J.F."/>
            <person name="Tettelin H."/>
            <person name="Dodson R.J."/>
            <person name="Umayam L.A."/>
            <person name="Brinkac L.M."/>
            <person name="Beanan M.J."/>
            <person name="Daugherty S.C."/>
            <person name="DeBoy R.T."/>
            <person name="Durkin S.A."/>
            <person name="Kolonay J.F."/>
            <person name="Madupu R."/>
            <person name="Nelson W.C."/>
            <person name="Vamathevan J.J."/>
            <person name="Tran B."/>
            <person name="Upton J."/>
            <person name="Hansen T."/>
            <person name="Shetty J."/>
            <person name="Khouri H.M."/>
            <person name="Utterback T.R."/>
            <person name="Radune D."/>
            <person name="Ketchum K.A."/>
            <person name="Dougherty B.A."/>
            <person name="Fraser C.M."/>
        </authorList>
    </citation>
    <scope>NUCLEOTIDE SEQUENCE [LARGE SCALE GENOMIC DNA]</scope>
    <source>
        <strain>ATCC 700802 / V583</strain>
    </source>
</reference>
<keyword id="KW-0963">Cytoplasm</keyword>
<keyword id="KW-0342">GTP-binding</keyword>
<keyword id="KW-0547">Nucleotide-binding</keyword>
<keyword id="KW-0648">Protein biosynthesis</keyword>
<keyword id="KW-1185">Reference proteome</keyword>
<sequence>MTINQKEAVDSRRTFAIISHPDAGKTTITEQLLLFGGAIRQAGTVKGKKTGNFAKSDWMEIEKQRGISVTSSVMQFDYQDKRINILDTPGHEDFSEDTYRTLMAVDSAVMVIDSAKGIEAQTKKLFQVVKKRGIPIFTFINKLDRDGREPLELLEELEELLDIESYPMNWPIGMGKGLEGLYDIYNERVELYRPENNGGERFIPLKDGDIPSDLPLHNNSVYQQVLEDVELLVEAGDEFSEEKIARGDQTPVFFGSALTNFGVQTFLETFLQFAPAPHAHKTEEGGEVSPYEKEFSGFVFKIQANMNPAHRDRIAFVRICSGVFERGMDVTLGRTGKKVKLSNVTQFMADARENVTEAVAGDIIGVYDTGNYQIGDTLYEGKMNVQYEELPSFTPELFMKVTAKNVMKQKSFHKGIYQLVQEGAIQLYKTYLTEEYIIGAVGQLQFEVFQYRMSNEYNAEVVMTPMGSKIARWINPEDLDERMSSSRNILARDRFDQPLFLFENQFAERWFADKYPDVELKSLM</sequence>
<accession>Q837X4</accession>
<protein>
    <recommendedName>
        <fullName evidence="1">Peptide chain release factor 3</fullName>
        <shortName evidence="1">RF-3</shortName>
    </recommendedName>
</protein>
<name>RF3_ENTFA</name>
<organism>
    <name type="scientific">Enterococcus faecalis (strain ATCC 700802 / V583)</name>
    <dbReference type="NCBI Taxonomy" id="226185"/>
    <lineage>
        <taxon>Bacteria</taxon>
        <taxon>Bacillati</taxon>
        <taxon>Bacillota</taxon>
        <taxon>Bacilli</taxon>
        <taxon>Lactobacillales</taxon>
        <taxon>Enterococcaceae</taxon>
        <taxon>Enterococcus</taxon>
    </lineage>
</organism>
<feature type="chain" id="PRO_0000210941" description="Peptide chain release factor 3">
    <location>
        <begin position="1"/>
        <end position="524"/>
    </location>
</feature>
<feature type="domain" description="tr-type G">
    <location>
        <begin position="10"/>
        <end position="278"/>
    </location>
</feature>
<feature type="binding site" evidence="1">
    <location>
        <begin position="19"/>
        <end position="26"/>
    </location>
    <ligand>
        <name>GTP</name>
        <dbReference type="ChEBI" id="CHEBI:37565"/>
    </ligand>
</feature>
<feature type="binding site" evidence="1">
    <location>
        <begin position="87"/>
        <end position="91"/>
    </location>
    <ligand>
        <name>GTP</name>
        <dbReference type="ChEBI" id="CHEBI:37565"/>
    </ligand>
</feature>
<feature type="binding site" evidence="1">
    <location>
        <begin position="141"/>
        <end position="144"/>
    </location>
    <ligand>
        <name>GTP</name>
        <dbReference type="ChEBI" id="CHEBI:37565"/>
    </ligand>
</feature>
<evidence type="ECO:0000255" key="1">
    <source>
        <dbReference type="HAMAP-Rule" id="MF_00072"/>
    </source>
</evidence>
<dbReference type="EMBL" id="AE016830">
    <property type="protein sequence ID" value="AAO80522.1"/>
    <property type="molecule type" value="Genomic_DNA"/>
</dbReference>
<dbReference type="RefSeq" id="NP_814452.1">
    <property type="nucleotide sequence ID" value="NC_004668.1"/>
</dbReference>
<dbReference type="RefSeq" id="WP_002355543.1">
    <property type="nucleotide sequence ID" value="NZ_KE136527.1"/>
</dbReference>
<dbReference type="SMR" id="Q837X4"/>
<dbReference type="STRING" id="226185.EF_0701"/>
<dbReference type="EnsemblBacteria" id="AAO80522">
    <property type="protein sequence ID" value="AAO80522"/>
    <property type="gene ID" value="EF_0701"/>
</dbReference>
<dbReference type="KEGG" id="efa:EF0701"/>
<dbReference type="PATRIC" id="fig|226185.45.peg.2643"/>
<dbReference type="eggNOG" id="COG4108">
    <property type="taxonomic scope" value="Bacteria"/>
</dbReference>
<dbReference type="HOGENOM" id="CLU_002794_2_1_9"/>
<dbReference type="Proteomes" id="UP000001415">
    <property type="component" value="Chromosome"/>
</dbReference>
<dbReference type="GO" id="GO:0005829">
    <property type="term" value="C:cytosol"/>
    <property type="evidence" value="ECO:0007669"/>
    <property type="project" value="TreeGrafter"/>
</dbReference>
<dbReference type="GO" id="GO:0005525">
    <property type="term" value="F:GTP binding"/>
    <property type="evidence" value="ECO:0007669"/>
    <property type="project" value="UniProtKB-UniRule"/>
</dbReference>
<dbReference type="GO" id="GO:0003924">
    <property type="term" value="F:GTPase activity"/>
    <property type="evidence" value="ECO:0007669"/>
    <property type="project" value="InterPro"/>
</dbReference>
<dbReference type="GO" id="GO:0016150">
    <property type="term" value="F:translation release factor activity, codon nonspecific"/>
    <property type="evidence" value="ECO:0007669"/>
    <property type="project" value="TreeGrafter"/>
</dbReference>
<dbReference type="GO" id="GO:0016149">
    <property type="term" value="F:translation release factor activity, codon specific"/>
    <property type="evidence" value="ECO:0007669"/>
    <property type="project" value="UniProtKB-UniRule"/>
</dbReference>
<dbReference type="GO" id="GO:0006449">
    <property type="term" value="P:regulation of translational termination"/>
    <property type="evidence" value="ECO:0007669"/>
    <property type="project" value="UniProtKB-UniRule"/>
</dbReference>
<dbReference type="CDD" id="cd04169">
    <property type="entry name" value="RF3"/>
    <property type="match status" value="1"/>
</dbReference>
<dbReference type="CDD" id="cd03689">
    <property type="entry name" value="RF3_II"/>
    <property type="match status" value="1"/>
</dbReference>
<dbReference type="CDD" id="cd16259">
    <property type="entry name" value="RF3_III"/>
    <property type="match status" value="1"/>
</dbReference>
<dbReference type="FunFam" id="2.40.30.10:FF:000040">
    <property type="entry name" value="Peptide chain release factor 3"/>
    <property type="match status" value="1"/>
</dbReference>
<dbReference type="FunFam" id="3.30.70.3280:FF:000001">
    <property type="entry name" value="Peptide chain release factor 3"/>
    <property type="match status" value="1"/>
</dbReference>
<dbReference type="FunFam" id="3.40.50.300:FF:000542">
    <property type="entry name" value="Peptide chain release factor 3"/>
    <property type="match status" value="1"/>
</dbReference>
<dbReference type="Gene3D" id="3.40.50.300">
    <property type="entry name" value="P-loop containing nucleotide triphosphate hydrolases"/>
    <property type="match status" value="1"/>
</dbReference>
<dbReference type="Gene3D" id="3.30.70.3280">
    <property type="entry name" value="Peptide chain release factor 3, domain III"/>
    <property type="match status" value="1"/>
</dbReference>
<dbReference type="Gene3D" id="2.40.30.10">
    <property type="entry name" value="Translation factors"/>
    <property type="match status" value="1"/>
</dbReference>
<dbReference type="HAMAP" id="MF_00072">
    <property type="entry name" value="Rel_fac_3"/>
    <property type="match status" value="1"/>
</dbReference>
<dbReference type="InterPro" id="IPR053905">
    <property type="entry name" value="EF-G-like_DII"/>
</dbReference>
<dbReference type="InterPro" id="IPR035647">
    <property type="entry name" value="EFG_III/V"/>
</dbReference>
<dbReference type="InterPro" id="IPR031157">
    <property type="entry name" value="G_TR_CS"/>
</dbReference>
<dbReference type="InterPro" id="IPR027417">
    <property type="entry name" value="P-loop_NTPase"/>
</dbReference>
<dbReference type="InterPro" id="IPR004548">
    <property type="entry name" value="PrfC"/>
</dbReference>
<dbReference type="InterPro" id="IPR032090">
    <property type="entry name" value="RF3_C"/>
</dbReference>
<dbReference type="InterPro" id="IPR038467">
    <property type="entry name" value="RF3_dom_3_sf"/>
</dbReference>
<dbReference type="InterPro" id="IPR041732">
    <property type="entry name" value="RF3_GTP-bd"/>
</dbReference>
<dbReference type="InterPro" id="IPR005225">
    <property type="entry name" value="Small_GTP-bd"/>
</dbReference>
<dbReference type="InterPro" id="IPR000795">
    <property type="entry name" value="T_Tr_GTP-bd_dom"/>
</dbReference>
<dbReference type="InterPro" id="IPR009000">
    <property type="entry name" value="Transl_B-barrel_sf"/>
</dbReference>
<dbReference type="NCBIfam" id="TIGR00503">
    <property type="entry name" value="prfC"/>
    <property type="match status" value="1"/>
</dbReference>
<dbReference type="NCBIfam" id="NF001964">
    <property type="entry name" value="PRK00741.1"/>
    <property type="match status" value="1"/>
</dbReference>
<dbReference type="NCBIfam" id="TIGR00231">
    <property type="entry name" value="small_GTP"/>
    <property type="match status" value="1"/>
</dbReference>
<dbReference type="PANTHER" id="PTHR43556">
    <property type="entry name" value="PEPTIDE CHAIN RELEASE FACTOR RF3"/>
    <property type="match status" value="1"/>
</dbReference>
<dbReference type="PANTHER" id="PTHR43556:SF2">
    <property type="entry name" value="PEPTIDE CHAIN RELEASE FACTOR RF3"/>
    <property type="match status" value="1"/>
</dbReference>
<dbReference type="Pfam" id="PF22042">
    <property type="entry name" value="EF-G_D2"/>
    <property type="match status" value="1"/>
</dbReference>
<dbReference type="Pfam" id="PF00009">
    <property type="entry name" value="GTP_EFTU"/>
    <property type="match status" value="1"/>
</dbReference>
<dbReference type="Pfam" id="PF16658">
    <property type="entry name" value="RF3_C"/>
    <property type="match status" value="1"/>
</dbReference>
<dbReference type="PRINTS" id="PR00315">
    <property type="entry name" value="ELONGATNFCT"/>
</dbReference>
<dbReference type="SUPFAM" id="SSF54980">
    <property type="entry name" value="EF-G C-terminal domain-like"/>
    <property type="match status" value="1"/>
</dbReference>
<dbReference type="SUPFAM" id="SSF52540">
    <property type="entry name" value="P-loop containing nucleoside triphosphate hydrolases"/>
    <property type="match status" value="1"/>
</dbReference>
<dbReference type="SUPFAM" id="SSF50447">
    <property type="entry name" value="Translation proteins"/>
    <property type="match status" value="1"/>
</dbReference>
<dbReference type="PROSITE" id="PS00301">
    <property type="entry name" value="G_TR_1"/>
    <property type="match status" value="1"/>
</dbReference>
<dbReference type="PROSITE" id="PS51722">
    <property type="entry name" value="G_TR_2"/>
    <property type="match status" value="1"/>
</dbReference>
<proteinExistence type="inferred from homology"/>